<name>COX10_ARATH</name>
<comment type="function">
    <text evidence="1">Converts protoheme IX and farnesyl diphosphate to heme O.</text>
</comment>
<comment type="catalytic activity">
    <reaction evidence="2">
        <text>heme b + (2E,6E)-farnesyl diphosphate + H2O = Fe(II)-heme o + diphosphate</text>
        <dbReference type="Rhea" id="RHEA:28070"/>
        <dbReference type="ChEBI" id="CHEBI:15377"/>
        <dbReference type="ChEBI" id="CHEBI:33019"/>
        <dbReference type="ChEBI" id="CHEBI:60344"/>
        <dbReference type="ChEBI" id="CHEBI:60530"/>
        <dbReference type="ChEBI" id="CHEBI:175763"/>
        <dbReference type="EC" id="2.5.1.141"/>
    </reaction>
</comment>
<comment type="subcellular location">
    <subcellularLocation>
        <location evidence="1">Mitochondrion inner membrane</location>
        <topology evidence="1">Multi-pass membrane protein</topology>
    </subcellularLocation>
</comment>
<comment type="similarity">
    <text evidence="4">Belongs to the ubiA prenyltransferase (TC 3.D.4.8) family.</text>
</comment>
<organism>
    <name type="scientific">Arabidopsis thaliana</name>
    <name type="common">Mouse-ear cress</name>
    <dbReference type="NCBI Taxonomy" id="3702"/>
    <lineage>
        <taxon>Eukaryota</taxon>
        <taxon>Viridiplantae</taxon>
        <taxon>Streptophyta</taxon>
        <taxon>Embryophyta</taxon>
        <taxon>Tracheophyta</taxon>
        <taxon>Spermatophyta</taxon>
        <taxon>Magnoliopsida</taxon>
        <taxon>eudicotyledons</taxon>
        <taxon>Gunneridae</taxon>
        <taxon>Pentapetalae</taxon>
        <taxon>rosids</taxon>
        <taxon>malvids</taxon>
        <taxon>Brassicales</taxon>
        <taxon>Brassicaceae</taxon>
        <taxon>Camelineae</taxon>
        <taxon>Arabidopsis</taxon>
    </lineage>
</organism>
<gene>
    <name type="primary">COX10</name>
    <name type="ordered locus">At2g44520</name>
    <name type="ORF">F16B22_1</name>
    <name type="ORF">F4I1.50</name>
</gene>
<evidence type="ECO:0000250" key="1"/>
<evidence type="ECO:0000250" key="2">
    <source>
        <dbReference type="UniProtKB" id="P24009"/>
    </source>
</evidence>
<evidence type="ECO:0000255" key="3"/>
<evidence type="ECO:0000305" key="4"/>
<feature type="transit peptide" description="Mitochondrion" evidence="3">
    <location>
        <begin position="1"/>
        <end position="33"/>
    </location>
</feature>
<feature type="chain" id="PRO_0000412563" description="Protoheme IX farnesyltransferase, mitochondrial">
    <location>
        <begin position="34"/>
        <end position="431"/>
    </location>
</feature>
<feature type="transmembrane region" description="Helical" evidence="3">
    <location>
        <begin position="109"/>
        <end position="129"/>
    </location>
</feature>
<feature type="transmembrane region" description="Helical" evidence="3">
    <location>
        <begin position="131"/>
        <end position="153"/>
    </location>
</feature>
<feature type="transmembrane region" description="Helical" evidence="3">
    <location>
        <begin position="174"/>
        <end position="194"/>
    </location>
</feature>
<feature type="transmembrane region" description="Helical" evidence="3">
    <location>
        <begin position="200"/>
        <end position="220"/>
    </location>
</feature>
<feature type="transmembrane region" description="Helical" evidence="3">
    <location>
        <begin position="226"/>
        <end position="246"/>
    </location>
</feature>
<feature type="transmembrane region" description="Helical" evidence="3">
    <location>
        <begin position="255"/>
        <end position="275"/>
    </location>
</feature>
<feature type="transmembrane region" description="Helical" evidence="3">
    <location>
        <begin position="298"/>
        <end position="317"/>
    </location>
</feature>
<feature type="transmembrane region" description="Helical" evidence="3">
    <location>
        <begin position="322"/>
        <end position="344"/>
    </location>
</feature>
<feature type="transmembrane region" description="Helical" evidence="3">
    <location>
        <begin position="356"/>
        <end position="376"/>
    </location>
</feature>
<keyword id="KW-0350">Heme biosynthesis</keyword>
<keyword id="KW-0472">Membrane</keyword>
<keyword id="KW-0496">Mitochondrion</keyword>
<keyword id="KW-0999">Mitochondrion inner membrane</keyword>
<keyword id="KW-1185">Reference proteome</keyword>
<keyword id="KW-0808">Transferase</keyword>
<keyword id="KW-0809">Transit peptide</keyword>
<keyword id="KW-0812">Transmembrane</keyword>
<keyword id="KW-1133">Transmembrane helix</keyword>
<proteinExistence type="evidence at transcript level"/>
<reference key="1">
    <citation type="journal article" date="1999" name="Nature">
        <title>Sequence and analysis of chromosome 2 of the plant Arabidopsis thaliana.</title>
        <authorList>
            <person name="Lin X."/>
            <person name="Kaul S."/>
            <person name="Rounsley S.D."/>
            <person name="Shea T.P."/>
            <person name="Benito M.-I."/>
            <person name="Town C.D."/>
            <person name="Fujii C.Y."/>
            <person name="Mason T.M."/>
            <person name="Bowman C.L."/>
            <person name="Barnstead M.E."/>
            <person name="Feldblyum T.V."/>
            <person name="Buell C.R."/>
            <person name="Ketchum K.A."/>
            <person name="Lee J.J."/>
            <person name="Ronning C.M."/>
            <person name="Koo H.L."/>
            <person name="Moffat K.S."/>
            <person name="Cronin L.A."/>
            <person name="Shen M."/>
            <person name="Pai G."/>
            <person name="Van Aken S."/>
            <person name="Umayam L."/>
            <person name="Tallon L.J."/>
            <person name="Gill J.E."/>
            <person name="Adams M.D."/>
            <person name="Carrera A.J."/>
            <person name="Creasy T.H."/>
            <person name="Goodman H.M."/>
            <person name="Somerville C.R."/>
            <person name="Copenhaver G.P."/>
            <person name="Preuss D."/>
            <person name="Nierman W.C."/>
            <person name="White O."/>
            <person name="Eisen J.A."/>
            <person name="Salzberg S.L."/>
            <person name="Fraser C.M."/>
            <person name="Venter J.C."/>
        </authorList>
    </citation>
    <scope>NUCLEOTIDE SEQUENCE [LARGE SCALE GENOMIC DNA]</scope>
    <source>
        <strain>cv. Columbia</strain>
    </source>
</reference>
<reference key="2">
    <citation type="journal article" date="2017" name="Plant J.">
        <title>Araport11: a complete reannotation of the Arabidopsis thaliana reference genome.</title>
        <authorList>
            <person name="Cheng C.Y."/>
            <person name="Krishnakumar V."/>
            <person name="Chan A.P."/>
            <person name="Thibaud-Nissen F."/>
            <person name="Schobel S."/>
            <person name="Town C.D."/>
        </authorList>
    </citation>
    <scope>GENOME REANNOTATION</scope>
    <source>
        <strain>cv. Columbia</strain>
    </source>
</reference>
<reference key="3">
    <citation type="journal article" date="2003" name="Science">
        <title>Empirical analysis of transcriptional activity in the Arabidopsis genome.</title>
        <authorList>
            <person name="Yamada K."/>
            <person name="Lim J."/>
            <person name="Dale J.M."/>
            <person name="Chen H."/>
            <person name="Shinn P."/>
            <person name="Palm C.J."/>
            <person name="Southwick A.M."/>
            <person name="Wu H.C."/>
            <person name="Kim C.J."/>
            <person name="Nguyen M."/>
            <person name="Pham P.K."/>
            <person name="Cheuk R.F."/>
            <person name="Karlin-Newmann G."/>
            <person name="Liu S.X."/>
            <person name="Lam B."/>
            <person name="Sakano H."/>
            <person name="Wu T."/>
            <person name="Yu G."/>
            <person name="Miranda M."/>
            <person name="Quach H.L."/>
            <person name="Tripp M."/>
            <person name="Chang C.H."/>
            <person name="Lee J.M."/>
            <person name="Toriumi M.J."/>
            <person name="Chan M.M."/>
            <person name="Tang C.C."/>
            <person name="Onodera C.S."/>
            <person name="Deng J.M."/>
            <person name="Akiyama K."/>
            <person name="Ansari Y."/>
            <person name="Arakawa T."/>
            <person name="Banh J."/>
            <person name="Banno F."/>
            <person name="Bowser L."/>
            <person name="Brooks S.Y."/>
            <person name="Carninci P."/>
            <person name="Chao Q."/>
            <person name="Choy N."/>
            <person name="Enju A."/>
            <person name="Goldsmith A.D."/>
            <person name="Gurjal M."/>
            <person name="Hansen N.F."/>
            <person name="Hayashizaki Y."/>
            <person name="Johnson-Hopson C."/>
            <person name="Hsuan V.W."/>
            <person name="Iida K."/>
            <person name="Karnes M."/>
            <person name="Khan S."/>
            <person name="Koesema E."/>
            <person name="Ishida J."/>
            <person name="Jiang P.X."/>
            <person name="Jones T."/>
            <person name="Kawai J."/>
            <person name="Kamiya A."/>
            <person name="Meyers C."/>
            <person name="Nakajima M."/>
            <person name="Narusaka M."/>
            <person name="Seki M."/>
            <person name="Sakurai T."/>
            <person name="Satou M."/>
            <person name="Tamse R."/>
            <person name="Vaysberg M."/>
            <person name="Wallender E.K."/>
            <person name="Wong C."/>
            <person name="Yamamura Y."/>
            <person name="Yuan S."/>
            <person name="Shinozaki K."/>
            <person name="Davis R.W."/>
            <person name="Theologis A."/>
            <person name="Ecker J.R."/>
        </authorList>
    </citation>
    <scope>NUCLEOTIDE SEQUENCE [LARGE SCALE MRNA]</scope>
    <source>
        <strain>cv. Columbia</strain>
    </source>
</reference>
<protein>
    <recommendedName>
        <fullName>Protoheme IX farnesyltransferase, mitochondrial</fullName>
        <ecNumber evidence="2">2.5.1.141</ecNumber>
    </recommendedName>
    <alternativeName>
        <fullName>Cytochrome c oxidase assembly protein COX10</fullName>
    </alternativeName>
    <alternativeName>
        <fullName>Heme O synthase</fullName>
    </alternativeName>
</protein>
<sequence length="431" mass="46475">MWRRSVVYRFSSRISVSSSLPNPRLIPWSRELCAVNSFSQPPVSTESTAKLGITGVRSDANRVFATATAAATATATTGEISSRVAALAGLGHHYARCYWELSKAKLSMLVVATSGTGYILGTGNAAISFPGLCYTCAGTMMIAASANSLNQIFEISNDSKMKRTMLRPLPSGRISVPHAVAWATIAGASGACLLASKTNMLAAGLASANLVLYAFVYTPLKQLHPINTWVGAVVGAIPPLLGWAAASGQISYNSMILPAALYFWQIPHFMALAHLCRNDYAAGGYKMLSLFDPSGKRIAAVALRNCFYMIPLGFIAYDWGLTSSWFCLESTLLTLAIAATAFSFYRDRTMHKARKMFHASLLFLPVFMSGLLLHRVSNDNQQQLVEEAGLTNSVSGEVKTQRRKKRVAQPPVAYASAAPFPFLPAPSFYSP</sequence>
<accession>O64886</accession>
<accession>Q94AL4</accession>
<dbReference type="EC" id="2.5.1.141" evidence="2"/>
<dbReference type="EMBL" id="AC003672">
    <property type="protein sequence ID" value="AAC27454.3"/>
    <property type="molecule type" value="Genomic_DNA"/>
</dbReference>
<dbReference type="EMBL" id="AC004521">
    <property type="protein sequence ID" value="AAM14960.1"/>
    <property type="molecule type" value="Genomic_DNA"/>
</dbReference>
<dbReference type="EMBL" id="CP002685">
    <property type="protein sequence ID" value="AEC10432.1"/>
    <property type="molecule type" value="Genomic_DNA"/>
</dbReference>
<dbReference type="EMBL" id="AY045952">
    <property type="protein sequence ID" value="AAK76626.1"/>
    <property type="molecule type" value="mRNA"/>
</dbReference>
<dbReference type="EMBL" id="AY114016">
    <property type="protein sequence ID" value="AAM45064.1"/>
    <property type="molecule type" value="mRNA"/>
</dbReference>
<dbReference type="PIR" id="E84879">
    <property type="entry name" value="E84879"/>
</dbReference>
<dbReference type="PIR" id="T01579">
    <property type="entry name" value="T01579"/>
</dbReference>
<dbReference type="RefSeq" id="NP_566019.1">
    <property type="nucleotide sequence ID" value="NM_130015.4"/>
</dbReference>
<dbReference type="SMR" id="O64886"/>
<dbReference type="FunCoup" id="O64886">
    <property type="interactions" value="3432"/>
</dbReference>
<dbReference type="STRING" id="3702.O64886"/>
<dbReference type="PaxDb" id="3702-AT2G44520.1"/>
<dbReference type="EnsemblPlants" id="AT2G44520.1">
    <property type="protein sequence ID" value="AT2G44520.1"/>
    <property type="gene ID" value="AT2G44520"/>
</dbReference>
<dbReference type="GeneID" id="819059"/>
<dbReference type="Gramene" id="AT2G44520.1">
    <property type="protein sequence ID" value="AT2G44520.1"/>
    <property type="gene ID" value="AT2G44520"/>
</dbReference>
<dbReference type="KEGG" id="ath:AT2G44520"/>
<dbReference type="Araport" id="AT2G44520"/>
<dbReference type="TAIR" id="AT2G44520">
    <property type="gene designation" value="COX10"/>
</dbReference>
<dbReference type="eggNOG" id="KOG1380">
    <property type="taxonomic scope" value="Eukaryota"/>
</dbReference>
<dbReference type="HOGENOM" id="CLU_029631_1_0_1"/>
<dbReference type="InParanoid" id="O64886"/>
<dbReference type="OMA" id="GCMVLHS"/>
<dbReference type="PhylomeDB" id="O64886"/>
<dbReference type="PRO" id="PR:O64886"/>
<dbReference type="Proteomes" id="UP000006548">
    <property type="component" value="Chromosome 2"/>
</dbReference>
<dbReference type="ExpressionAtlas" id="O64886">
    <property type="expression patterns" value="baseline and differential"/>
</dbReference>
<dbReference type="GO" id="GO:0005743">
    <property type="term" value="C:mitochondrial inner membrane"/>
    <property type="evidence" value="ECO:0007669"/>
    <property type="project" value="UniProtKB-SubCell"/>
</dbReference>
<dbReference type="GO" id="GO:0008495">
    <property type="term" value="F:protoheme IX farnesyltransferase activity"/>
    <property type="evidence" value="ECO:0007669"/>
    <property type="project" value="UniProtKB-EC"/>
</dbReference>
<dbReference type="GO" id="GO:0006783">
    <property type="term" value="P:heme biosynthetic process"/>
    <property type="evidence" value="ECO:0007669"/>
    <property type="project" value="UniProtKB-KW"/>
</dbReference>
<dbReference type="CDD" id="cd13957">
    <property type="entry name" value="PT_UbiA_Cox10"/>
    <property type="match status" value="1"/>
</dbReference>
<dbReference type="FunFam" id="1.10.357.140:FF:000006">
    <property type="entry name" value="Protoheme IX farnesyltransferase, mitochondrial"/>
    <property type="match status" value="1"/>
</dbReference>
<dbReference type="Gene3D" id="1.10.357.140">
    <property type="entry name" value="UbiA prenyltransferase"/>
    <property type="match status" value="1"/>
</dbReference>
<dbReference type="HAMAP" id="MF_00154">
    <property type="entry name" value="CyoE_CtaB"/>
    <property type="match status" value="1"/>
</dbReference>
<dbReference type="InterPro" id="IPR006369">
    <property type="entry name" value="Protohaem_IX_farnesylTrfase"/>
</dbReference>
<dbReference type="InterPro" id="IPR016315">
    <property type="entry name" value="Protohaem_IX_farnesylTrfase_mt"/>
</dbReference>
<dbReference type="InterPro" id="IPR000537">
    <property type="entry name" value="UbiA_prenyltransferase"/>
</dbReference>
<dbReference type="InterPro" id="IPR044878">
    <property type="entry name" value="UbiA_sf"/>
</dbReference>
<dbReference type="NCBIfam" id="TIGR01473">
    <property type="entry name" value="cyoE_ctaB"/>
    <property type="match status" value="1"/>
</dbReference>
<dbReference type="PANTHER" id="PTHR43448">
    <property type="entry name" value="PROTOHEME IX FARNESYLTRANSFERASE, MITOCHONDRIAL"/>
    <property type="match status" value="1"/>
</dbReference>
<dbReference type="PANTHER" id="PTHR43448:SF2">
    <property type="entry name" value="PROTOHEME IX FARNESYLTRANSFERASE, MITOCHONDRIAL"/>
    <property type="match status" value="1"/>
</dbReference>
<dbReference type="Pfam" id="PF01040">
    <property type="entry name" value="UbiA"/>
    <property type="match status" value="1"/>
</dbReference>
<dbReference type="PIRSF" id="PIRSF001773">
    <property type="entry name" value="COX10"/>
    <property type="match status" value="1"/>
</dbReference>